<sequence length="66" mass="6551">MSETNKNAFQAGQAAGKAEEKSNVLLDKAKDAAAAAGASAQQAGKSISDAAVGGVNFVKDKTGLNK</sequence>
<reference key="1">
    <citation type="journal article" date="1992" name="Plant Mol. Biol.">
        <title>cDNA sequence analysis and expression of two cold-regulated genes of Arabidopsis thaliana.</title>
        <authorList>
            <person name="Gilmour S.J."/>
            <person name="Artus N.N."/>
            <person name="Thomashow M.F."/>
        </authorList>
    </citation>
    <scope>NUCLEOTIDE SEQUENCE [MRNA]</scope>
    <scope>TISSUE SPECIFICITY</scope>
    <source>
        <strain>cv. Columbia</strain>
    </source>
</reference>
<reference key="2">
    <citation type="journal article" date="1992" name="Plant Mol. Biol.">
        <title>Structure and expression of kin2, one of two cold- and ABA-induced genes of Arabidopsis thaliana.</title>
        <authorList>
            <person name="Kurkela S."/>
            <person name="Borg-Franck M."/>
        </authorList>
    </citation>
    <scope>NUCLEOTIDE SEQUENCE [GENOMIC DNA]</scope>
    <scope>INDUCTION BY COLD STRESS; ABSCISIC ACID AND WATER STRESS</scope>
    <source>
        <strain>cv. Columbia</strain>
    </source>
</reference>
<reference key="3">
    <citation type="journal article" date="2000" name="Nature">
        <title>Sequence and analysis of chromosome 5 of the plant Arabidopsis thaliana.</title>
        <authorList>
            <person name="Tabata S."/>
            <person name="Kaneko T."/>
            <person name="Nakamura Y."/>
            <person name="Kotani H."/>
            <person name="Kato T."/>
            <person name="Asamizu E."/>
            <person name="Miyajima N."/>
            <person name="Sasamoto S."/>
            <person name="Kimura T."/>
            <person name="Hosouchi T."/>
            <person name="Kawashima K."/>
            <person name="Kohara M."/>
            <person name="Matsumoto M."/>
            <person name="Matsuno A."/>
            <person name="Muraki A."/>
            <person name="Nakayama S."/>
            <person name="Nakazaki N."/>
            <person name="Naruo K."/>
            <person name="Okumura S."/>
            <person name="Shinpo S."/>
            <person name="Takeuchi C."/>
            <person name="Wada T."/>
            <person name="Watanabe A."/>
            <person name="Yamada M."/>
            <person name="Yasuda M."/>
            <person name="Sato S."/>
            <person name="de la Bastide M."/>
            <person name="Huang E."/>
            <person name="Spiegel L."/>
            <person name="Gnoj L."/>
            <person name="O'Shaughnessy A."/>
            <person name="Preston R."/>
            <person name="Habermann K."/>
            <person name="Murray J."/>
            <person name="Johnson D."/>
            <person name="Rohlfing T."/>
            <person name="Nelson J."/>
            <person name="Stoneking T."/>
            <person name="Pepin K."/>
            <person name="Spieth J."/>
            <person name="Sekhon M."/>
            <person name="Armstrong J."/>
            <person name="Becker M."/>
            <person name="Belter E."/>
            <person name="Cordum H."/>
            <person name="Cordes M."/>
            <person name="Courtney L."/>
            <person name="Courtney W."/>
            <person name="Dante M."/>
            <person name="Du H."/>
            <person name="Edwards J."/>
            <person name="Fryman J."/>
            <person name="Haakensen B."/>
            <person name="Lamar E."/>
            <person name="Latreille P."/>
            <person name="Leonard S."/>
            <person name="Meyer R."/>
            <person name="Mulvaney E."/>
            <person name="Ozersky P."/>
            <person name="Riley A."/>
            <person name="Strowmatt C."/>
            <person name="Wagner-McPherson C."/>
            <person name="Wollam A."/>
            <person name="Yoakum M."/>
            <person name="Bell M."/>
            <person name="Dedhia N."/>
            <person name="Parnell L."/>
            <person name="Shah R."/>
            <person name="Rodriguez M."/>
            <person name="Hoon See L."/>
            <person name="Vil D."/>
            <person name="Baker J."/>
            <person name="Kirchoff K."/>
            <person name="Toth K."/>
            <person name="King L."/>
            <person name="Bahret A."/>
            <person name="Miller B."/>
            <person name="Marra M.A."/>
            <person name="Martienssen R."/>
            <person name="McCombie W.R."/>
            <person name="Wilson R.K."/>
            <person name="Murphy G."/>
            <person name="Bancroft I."/>
            <person name="Volckaert G."/>
            <person name="Wambutt R."/>
            <person name="Duesterhoeft A."/>
            <person name="Stiekema W."/>
            <person name="Pohl T."/>
            <person name="Entian K.-D."/>
            <person name="Terryn N."/>
            <person name="Hartley N."/>
            <person name="Bent E."/>
            <person name="Johnson S."/>
            <person name="Langham S.-A."/>
            <person name="McCullagh B."/>
            <person name="Robben J."/>
            <person name="Grymonprez B."/>
            <person name="Zimmermann W."/>
            <person name="Ramsperger U."/>
            <person name="Wedler H."/>
            <person name="Balke K."/>
            <person name="Wedler E."/>
            <person name="Peters S."/>
            <person name="van Staveren M."/>
            <person name="Dirkse W."/>
            <person name="Mooijman P."/>
            <person name="Klein Lankhorst R."/>
            <person name="Weitzenegger T."/>
            <person name="Bothe G."/>
            <person name="Rose M."/>
            <person name="Hauf J."/>
            <person name="Berneiser S."/>
            <person name="Hempel S."/>
            <person name="Feldpausch M."/>
            <person name="Lamberth S."/>
            <person name="Villarroel R."/>
            <person name="Gielen J."/>
            <person name="Ardiles W."/>
            <person name="Bents O."/>
            <person name="Lemcke K."/>
            <person name="Kolesov G."/>
            <person name="Mayer K.F.X."/>
            <person name="Rudd S."/>
            <person name="Schoof H."/>
            <person name="Schueller C."/>
            <person name="Zaccaria P."/>
            <person name="Mewes H.-W."/>
            <person name="Bevan M."/>
            <person name="Fransz P.F."/>
        </authorList>
    </citation>
    <scope>NUCLEOTIDE SEQUENCE [LARGE SCALE GENOMIC DNA]</scope>
    <source>
        <strain>cv. Columbia</strain>
    </source>
</reference>
<reference key="4">
    <citation type="journal article" date="2017" name="Plant J.">
        <title>Araport11: a complete reannotation of the Arabidopsis thaliana reference genome.</title>
        <authorList>
            <person name="Cheng C.Y."/>
            <person name="Krishnakumar V."/>
            <person name="Chan A.P."/>
            <person name="Thibaud-Nissen F."/>
            <person name="Schobel S."/>
            <person name="Town C.D."/>
        </authorList>
    </citation>
    <scope>GENOME REANNOTATION</scope>
    <source>
        <strain>cv. Columbia</strain>
    </source>
</reference>
<reference key="5">
    <citation type="journal article" date="2003" name="Science">
        <title>Empirical analysis of transcriptional activity in the Arabidopsis genome.</title>
        <authorList>
            <person name="Yamada K."/>
            <person name="Lim J."/>
            <person name="Dale J.M."/>
            <person name="Chen H."/>
            <person name="Shinn P."/>
            <person name="Palm C.J."/>
            <person name="Southwick A.M."/>
            <person name="Wu H.C."/>
            <person name="Kim C.J."/>
            <person name="Nguyen M."/>
            <person name="Pham P.K."/>
            <person name="Cheuk R.F."/>
            <person name="Karlin-Newmann G."/>
            <person name="Liu S.X."/>
            <person name="Lam B."/>
            <person name="Sakano H."/>
            <person name="Wu T."/>
            <person name="Yu G."/>
            <person name="Miranda M."/>
            <person name="Quach H.L."/>
            <person name="Tripp M."/>
            <person name="Chang C.H."/>
            <person name="Lee J.M."/>
            <person name="Toriumi M.J."/>
            <person name="Chan M.M."/>
            <person name="Tang C.C."/>
            <person name="Onodera C.S."/>
            <person name="Deng J.M."/>
            <person name="Akiyama K."/>
            <person name="Ansari Y."/>
            <person name="Arakawa T."/>
            <person name="Banh J."/>
            <person name="Banno F."/>
            <person name="Bowser L."/>
            <person name="Brooks S.Y."/>
            <person name="Carninci P."/>
            <person name="Chao Q."/>
            <person name="Choy N."/>
            <person name="Enju A."/>
            <person name="Goldsmith A.D."/>
            <person name="Gurjal M."/>
            <person name="Hansen N.F."/>
            <person name="Hayashizaki Y."/>
            <person name="Johnson-Hopson C."/>
            <person name="Hsuan V.W."/>
            <person name="Iida K."/>
            <person name="Karnes M."/>
            <person name="Khan S."/>
            <person name="Koesema E."/>
            <person name="Ishida J."/>
            <person name="Jiang P.X."/>
            <person name="Jones T."/>
            <person name="Kawai J."/>
            <person name="Kamiya A."/>
            <person name="Meyers C."/>
            <person name="Nakajima M."/>
            <person name="Narusaka M."/>
            <person name="Seki M."/>
            <person name="Sakurai T."/>
            <person name="Satou M."/>
            <person name="Tamse R."/>
            <person name="Vaysberg M."/>
            <person name="Wallender E.K."/>
            <person name="Wong C."/>
            <person name="Yamamura Y."/>
            <person name="Yuan S."/>
            <person name="Shinozaki K."/>
            <person name="Davis R.W."/>
            <person name="Theologis A."/>
            <person name="Ecker J.R."/>
        </authorList>
    </citation>
    <scope>NUCLEOTIDE SEQUENCE [LARGE SCALE MRNA]</scope>
    <source>
        <strain>cv. Columbia</strain>
    </source>
</reference>
<reference key="6">
    <citation type="journal article" date="2014" name="Plant Cell">
        <title>A DEK domain-containing protein modulates chromatin structure and function in Arabidopsis.</title>
        <authorList>
            <person name="Waidmann S."/>
            <person name="Kusenda B."/>
            <person name="Mayerhofer J."/>
            <person name="Mechtler K."/>
            <person name="Jonak C."/>
        </authorList>
    </citation>
    <scope>INTERACTION WITH DEK3</scope>
    <scope>IDENTIFICATION BY MASS SPECTROMETRY</scope>
    <source>
        <strain>cv. Columbia</strain>
    </source>
</reference>
<gene>
    <name evidence="5" type="primary">KIN2</name>
    <name evidence="6" type="synonym">COR6.6</name>
    <name evidence="8" type="ordered locus">At5g15970</name>
    <name evidence="9" type="ORF">F1N13_110</name>
</gene>
<dbReference type="EMBL" id="X55053">
    <property type="protein sequence ID" value="CAA38894.1"/>
    <property type="molecule type" value="mRNA"/>
</dbReference>
<dbReference type="EMBL" id="X62281">
    <property type="protein sequence ID" value="CAA44171.1"/>
    <property type="status" value="ALT_SEQ"/>
    <property type="molecule type" value="Genomic_DNA"/>
</dbReference>
<dbReference type="EMBL" id="AL391145">
    <property type="protein sequence ID" value="CAC01796.1"/>
    <property type="molecule type" value="Genomic_DNA"/>
</dbReference>
<dbReference type="EMBL" id="CP002688">
    <property type="protein sequence ID" value="AED92231.1"/>
    <property type="molecule type" value="Genomic_DNA"/>
</dbReference>
<dbReference type="EMBL" id="AY072302">
    <property type="protein sequence ID" value="AAL61909.1"/>
    <property type="molecule type" value="mRNA"/>
</dbReference>
<dbReference type="EMBL" id="AY114545">
    <property type="protein sequence ID" value="AAM47864.1"/>
    <property type="molecule type" value="mRNA"/>
</dbReference>
<dbReference type="PIR" id="S22529">
    <property type="entry name" value="S22529"/>
</dbReference>
<dbReference type="RefSeq" id="NP_197101.1">
    <property type="nucleotide sequence ID" value="NM_121602.4"/>
</dbReference>
<dbReference type="SMR" id="P31169"/>
<dbReference type="BioGRID" id="16730">
    <property type="interactions" value="2"/>
</dbReference>
<dbReference type="FunCoup" id="P31169">
    <property type="interactions" value="27"/>
</dbReference>
<dbReference type="IntAct" id="P31169">
    <property type="interactions" value="1"/>
</dbReference>
<dbReference type="STRING" id="3702.P31169"/>
<dbReference type="iPTMnet" id="P31169"/>
<dbReference type="PaxDb" id="3702-AT5G15970.1"/>
<dbReference type="ProteomicsDB" id="238219"/>
<dbReference type="EnsemblPlants" id="AT5G15970.1">
    <property type="protein sequence ID" value="AT5G15970.1"/>
    <property type="gene ID" value="AT5G15970"/>
</dbReference>
<dbReference type="GeneID" id="831454"/>
<dbReference type="Gramene" id="AT5G15970.1">
    <property type="protein sequence ID" value="AT5G15970.1"/>
    <property type="gene ID" value="AT5G15970"/>
</dbReference>
<dbReference type="KEGG" id="ath:AT5G15970"/>
<dbReference type="Araport" id="AT5G15970"/>
<dbReference type="TAIR" id="AT5G15970">
    <property type="gene designation" value="KIN2"/>
</dbReference>
<dbReference type="HOGENOM" id="CLU_173561_1_0_1"/>
<dbReference type="InParanoid" id="P31169"/>
<dbReference type="PhylomeDB" id="P31169"/>
<dbReference type="PRO" id="PR:P31169"/>
<dbReference type="Proteomes" id="UP000006548">
    <property type="component" value="Chromosome 5"/>
</dbReference>
<dbReference type="ExpressionAtlas" id="P31169">
    <property type="expression patterns" value="baseline and differential"/>
</dbReference>
<dbReference type="GO" id="GO:0009507">
    <property type="term" value="C:chloroplast"/>
    <property type="evidence" value="ECO:0007005"/>
    <property type="project" value="TAIR"/>
</dbReference>
<dbReference type="GO" id="GO:0005737">
    <property type="term" value="C:cytoplasm"/>
    <property type="evidence" value="ECO:0007005"/>
    <property type="project" value="TAIR"/>
</dbReference>
<dbReference type="GO" id="GO:0005829">
    <property type="term" value="C:cytosol"/>
    <property type="evidence" value="ECO:0007005"/>
    <property type="project" value="TAIR"/>
</dbReference>
<dbReference type="GO" id="GO:0005634">
    <property type="term" value="C:nucleus"/>
    <property type="evidence" value="ECO:0007005"/>
    <property type="project" value="TAIR"/>
</dbReference>
<dbReference type="GO" id="GO:0009536">
    <property type="term" value="C:plastid"/>
    <property type="evidence" value="ECO:0007005"/>
    <property type="project" value="TAIR"/>
</dbReference>
<dbReference type="GO" id="GO:0003729">
    <property type="term" value="F:mRNA binding"/>
    <property type="evidence" value="ECO:0000314"/>
    <property type="project" value="TAIR"/>
</dbReference>
<dbReference type="GO" id="GO:0009737">
    <property type="term" value="P:response to abscisic acid"/>
    <property type="evidence" value="ECO:0000270"/>
    <property type="project" value="TAIR"/>
</dbReference>
<dbReference type="GO" id="GO:0006970">
    <property type="term" value="P:response to osmotic stress"/>
    <property type="evidence" value="ECO:0000270"/>
    <property type="project" value="TAIR"/>
</dbReference>
<dbReference type="GO" id="GO:0009414">
    <property type="term" value="P:response to water deprivation"/>
    <property type="evidence" value="ECO:0000270"/>
    <property type="project" value="TAIR"/>
</dbReference>
<dbReference type="InterPro" id="IPR039624">
    <property type="entry name" value="LEA1/2/D7/KIN2"/>
</dbReference>
<dbReference type="PANTHER" id="PTHR34191">
    <property type="entry name" value="LATE EMBRYOGENESIS ABUNDANT PROTEIN (LEA) FAMILY PROTEIN"/>
    <property type="match status" value="1"/>
</dbReference>
<dbReference type="PANTHER" id="PTHR34191:SF32">
    <property type="entry name" value="STRESS-INDUCED PROTEIN KIN1-RELATED"/>
    <property type="match status" value="1"/>
</dbReference>
<proteinExistence type="evidence at protein level"/>
<feature type="chain" id="PRO_0000155162" description="Stress-induced protein KIN2">
    <location>
        <begin position="1"/>
        <end position="66"/>
    </location>
</feature>
<feature type="repeat">
    <location>
        <begin position="31"/>
        <end position="35"/>
    </location>
</feature>
<feature type="repeat">
    <location>
        <begin position="49"/>
        <end position="53"/>
    </location>
</feature>
<feature type="region of interest" description="Disordered" evidence="1">
    <location>
        <begin position="1"/>
        <end position="20"/>
    </location>
</feature>
<feature type="compositionally biased region" description="Polar residues" evidence="1">
    <location>
        <begin position="1"/>
        <end position="10"/>
    </location>
</feature>
<accession>P31169</accession>
<comment type="subunit">
    <text evidence="4">Interacts with DEK3.</text>
</comment>
<comment type="tissue specificity">
    <text evidence="3">Expressed at high levels in embryos and mature seeds.</text>
</comment>
<comment type="induction">
    <text evidence="2 3">By cold stress, abscisic acid (ABA) and water stress.</text>
</comment>
<comment type="sequence caution" evidence="7">
    <conflict type="erroneous gene model prediction">
        <sequence resource="EMBL-CDS" id="CAA44171"/>
    </conflict>
</comment>
<keyword id="KW-1185">Reference proteome</keyword>
<keyword id="KW-0677">Repeat</keyword>
<keyword id="KW-0346">Stress response</keyword>
<name>KIN2_ARATH</name>
<evidence type="ECO:0000256" key="1">
    <source>
        <dbReference type="SAM" id="MobiDB-lite"/>
    </source>
</evidence>
<evidence type="ECO:0000269" key="2">
    <source>
    </source>
</evidence>
<evidence type="ECO:0000269" key="3">
    <source>
    </source>
</evidence>
<evidence type="ECO:0000269" key="4">
    <source>
    </source>
</evidence>
<evidence type="ECO:0000303" key="5">
    <source>
    </source>
</evidence>
<evidence type="ECO:0000303" key="6">
    <source>
    </source>
</evidence>
<evidence type="ECO:0000305" key="7"/>
<evidence type="ECO:0000312" key="8">
    <source>
        <dbReference type="Araport" id="AT5G15970"/>
    </source>
</evidence>
<evidence type="ECO:0000312" key="9">
    <source>
        <dbReference type="EMBL" id="CAC01796.1"/>
    </source>
</evidence>
<protein>
    <recommendedName>
        <fullName evidence="5">Stress-induced protein KIN2</fullName>
    </recommendedName>
    <alternativeName>
        <fullName evidence="6">Cold-induced protein COR6.6</fullName>
    </alternativeName>
</protein>
<organism>
    <name type="scientific">Arabidopsis thaliana</name>
    <name type="common">Mouse-ear cress</name>
    <dbReference type="NCBI Taxonomy" id="3702"/>
    <lineage>
        <taxon>Eukaryota</taxon>
        <taxon>Viridiplantae</taxon>
        <taxon>Streptophyta</taxon>
        <taxon>Embryophyta</taxon>
        <taxon>Tracheophyta</taxon>
        <taxon>Spermatophyta</taxon>
        <taxon>Magnoliopsida</taxon>
        <taxon>eudicotyledons</taxon>
        <taxon>Gunneridae</taxon>
        <taxon>Pentapetalae</taxon>
        <taxon>rosids</taxon>
        <taxon>malvids</taxon>
        <taxon>Brassicales</taxon>
        <taxon>Brassicaceae</taxon>
        <taxon>Camelineae</taxon>
        <taxon>Arabidopsis</taxon>
    </lineage>
</organism>